<name>Y1235_LIMF3</name>
<protein>
    <recommendedName>
        <fullName evidence="1">UPF0122 protein LAF_1235</fullName>
    </recommendedName>
</protein>
<proteinExistence type="inferred from homology"/>
<accession>B2GD39</accession>
<reference key="1">
    <citation type="journal article" date="2008" name="DNA Res.">
        <title>Comparative genome analysis of Lactobacillus reuteri and Lactobacillus fermentum reveal a genomic island for reuterin and cobalamin production.</title>
        <authorList>
            <person name="Morita H."/>
            <person name="Toh H."/>
            <person name="Fukuda S."/>
            <person name="Horikawa H."/>
            <person name="Oshima K."/>
            <person name="Suzuki T."/>
            <person name="Murakami M."/>
            <person name="Hisamatsu S."/>
            <person name="Kato Y."/>
            <person name="Takizawa T."/>
            <person name="Fukuoka H."/>
            <person name="Yoshimura T."/>
            <person name="Itoh K."/>
            <person name="O'Sullivan D.J."/>
            <person name="McKay L.L."/>
            <person name="Ohno H."/>
            <person name="Kikuchi J."/>
            <person name="Masaoka T."/>
            <person name="Hattori M."/>
        </authorList>
    </citation>
    <scope>NUCLEOTIDE SEQUENCE [LARGE SCALE GENOMIC DNA]</scope>
    <source>
        <strain>NBRC 3956 / LMG 18251</strain>
    </source>
</reference>
<evidence type="ECO:0000255" key="1">
    <source>
        <dbReference type="HAMAP-Rule" id="MF_00245"/>
    </source>
</evidence>
<sequence length="113" mass="13423">MELEKNERINALFAFYQPLLTAKQNDYLQLYYADDYSLGEIATEFSVSRQAVYDNIKRTEKILEGYEQKLHLYAEFEARNQQADRIRDYVLSHYPTDQTLRDLIDGMENLEAK</sequence>
<dbReference type="EMBL" id="AP008937">
    <property type="protein sequence ID" value="BAG27571.1"/>
    <property type="molecule type" value="Genomic_DNA"/>
</dbReference>
<dbReference type="RefSeq" id="WP_003686289.1">
    <property type="nucleotide sequence ID" value="NC_010610.1"/>
</dbReference>
<dbReference type="SMR" id="B2GD39"/>
<dbReference type="KEGG" id="lfe:LAF_1235"/>
<dbReference type="eggNOG" id="COG2739">
    <property type="taxonomic scope" value="Bacteria"/>
</dbReference>
<dbReference type="HOGENOM" id="CLU_129218_1_0_9"/>
<dbReference type="Proteomes" id="UP000001697">
    <property type="component" value="Chromosome"/>
</dbReference>
<dbReference type="Gene3D" id="1.10.10.10">
    <property type="entry name" value="Winged helix-like DNA-binding domain superfamily/Winged helix DNA-binding domain"/>
    <property type="match status" value="1"/>
</dbReference>
<dbReference type="HAMAP" id="MF_00245">
    <property type="entry name" value="UPF0122"/>
    <property type="match status" value="1"/>
</dbReference>
<dbReference type="InterPro" id="IPR013324">
    <property type="entry name" value="RNA_pol_sigma_r3/r4-like"/>
</dbReference>
<dbReference type="InterPro" id="IPR007394">
    <property type="entry name" value="UPF0122"/>
</dbReference>
<dbReference type="InterPro" id="IPR054831">
    <property type="entry name" value="UPF0122_fam_protein"/>
</dbReference>
<dbReference type="InterPro" id="IPR036388">
    <property type="entry name" value="WH-like_DNA-bd_sf"/>
</dbReference>
<dbReference type="NCBIfam" id="NF001068">
    <property type="entry name" value="PRK00118.1-4"/>
    <property type="match status" value="1"/>
</dbReference>
<dbReference type="NCBIfam" id="NF001070">
    <property type="entry name" value="PRK00118.1-6"/>
    <property type="match status" value="1"/>
</dbReference>
<dbReference type="NCBIfam" id="NF045758">
    <property type="entry name" value="YlxM"/>
    <property type="match status" value="1"/>
</dbReference>
<dbReference type="PANTHER" id="PTHR40083">
    <property type="entry name" value="UPF0122 PROTEIN CBO2450/CLC_2298"/>
    <property type="match status" value="1"/>
</dbReference>
<dbReference type="PANTHER" id="PTHR40083:SF1">
    <property type="entry name" value="UPF0122 PROTEIN YLXM"/>
    <property type="match status" value="1"/>
</dbReference>
<dbReference type="Pfam" id="PF04297">
    <property type="entry name" value="UPF0122"/>
    <property type="match status" value="1"/>
</dbReference>
<dbReference type="SUPFAM" id="SSF88659">
    <property type="entry name" value="Sigma3 and sigma4 domains of RNA polymerase sigma factors"/>
    <property type="match status" value="1"/>
</dbReference>
<organism>
    <name type="scientific">Limosilactobacillus fermentum (strain NBRC 3956 / LMG 18251)</name>
    <name type="common">Lactobacillus fermentum</name>
    <dbReference type="NCBI Taxonomy" id="334390"/>
    <lineage>
        <taxon>Bacteria</taxon>
        <taxon>Bacillati</taxon>
        <taxon>Bacillota</taxon>
        <taxon>Bacilli</taxon>
        <taxon>Lactobacillales</taxon>
        <taxon>Lactobacillaceae</taxon>
        <taxon>Limosilactobacillus</taxon>
    </lineage>
</organism>
<keyword id="KW-1185">Reference proteome</keyword>
<feature type="chain" id="PRO_1000100814" description="UPF0122 protein LAF_1235">
    <location>
        <begin position="1"/>
        <end position="113"/>
    </location>
</feature>
<comment type="function">
    <text evidence="1">Might take part in the signal recognition particle (SRP) pathway. This is inferred from the conservation of its genetic proximity to ftsY/ffh. May be a regulatory protein.</text>
</comment>
<comment type="similarity">
    <text evidence="1">Belongs to the UPF0122 family.</text>
</comment>
<gene>
    <name type="ordered locus">LAF_1235</name>
</gene>